<protein>
    <recommendedName>
        <fullName evidence="1">GTP cyclohydrolase-2</fullName>
        <ecNumber evidence="1">3.5.4.25</ecNumber>
    </recommendedName>
    <alternativeName>
        <fullName evidence="1">GTP cyclohydrolase II</fullName>
    </alternativeName>
</protein>
<name>RIBA_STRCO</name>
<dbReference type="EC" id="3.5.4.25" evidence="1"/>
<dbReference type="EMBL" id="AL939128">
    <property type="protein sequence ID" value="CAA19934.1"/>
    <property type="molecule type" value="Genomic_DNA"/>
</dbReference>
<dbReference type="PIR" id="T35154">
    <property type="entry name" value="T35154"/>
</dbReference>
<dbReference type="RefSeq" id="NP_630730.1">
    <property type="nucleotide sequence ID" value="NC_003888.3"/>
</dbReference>
<dbReference type="RefSeq" id="WP_011031080.1">
    <property type="nucleotide sequence ID" value="NZ_VNID01000002.1"/>
</dbReference>
<dbReference type="SMR" id="O88011"/>
<dbReference type="STRING" id="100226.gene:17764313"/>
<dbReference type="PaxDb" id="100226-SCO6655"/>
<dbReference type="GeneID" id="91382461"/>
<dbReference type="KEGG" id="sco:SCO6655"/>
<dbReference type="PATRIC" id="fig|100226.15.peg.6761"/>
<dbReference type="eggNOG" id="COG0807">
    <property type="taxonomic scope" value="Bacteria"/>
</dbReference>
<dbReference type="HOGENOM" id="CLU_020273_2_1_11"/>
<dbReference type="InParanoid" id="O88011"/>
<dbReference type="OrthoDB" id="9793111at2"/>
<dbReference type="PhylomeDB" id="O88011"/>
<dbReference type="BRENDA" id="3.5.4.25">
    <property type="organism ID" value="5998"/>
</dbReference>
<dbReference type="UniPathway" id="UPA00275">
    <property type="reaction ID" value="UER00400"/>
</dbReference>
<dbReference type="Proteomes" id="UP000001973">
    <property type="component" value="Chromosome"/>
</dbReference>
<dbReference type="GO" id="GO:0005829">
    <property type="term" value="C:cytosol"/>
    <property type="evidence" value="ECO:0000318"/>
    <property type="project" value="GO_Central"/>
</dbReference>
<dbReference type="GO" id="GO:0005525">
    <property type="term" value="F:GTP binding"/>
    <property type="evidence" value="ECO:0007669"/>
    <property type="project" value="UniProtKB-KW"/>
</dbReference>
<dbReference type="GO" id="GO:0003935">
    <property type="term" value="F:GTP cyclohydrolase II activity"/>
    <property type="evidence" value="ECO:0000318"/>
    <property type="project" value="GO_Central"/>
</dbReference>
<dbReference type="GO" id="GO:0008270">
    <property type="term" value="F:zinc ion binding"/>
    <property type="evidence" value="ECO:0007669"/>
    <property type="project" value="UniProtKB-UniRule"/>
</dbReference>
<dbReference type="GO" id="GO:0009231">
    <property type="term" value="P:riboflavin biosynthetic process"/>
    <property type="evidence" value="ECO:0000318"/>
    <property type="project" value="GO_Central"/>
</dbReference>
<dbReference type="CDD" id="cd00641">
    <property type="entry name" value="GTP_cyclohydro2"/>
    <property type="match status" value="1"/>
</dbReference>
<dbReference type="FunFam" id="3.40.50.10990:FF:000001">
    <property type="entry name" value="Riboflavin biosynthesis protein RibBA"/>
    <property type="match status" value="1"/>
</dbReference>
<dbReference type="Gene3D" id="3.40.50.10990">
    <property type="entry name" value="GTP cyclohydrolase II"/>
    <property type="match status" value="1"/>
</dbReference>
<dbReference type="HAMAP" id="MF_00179">
    <property type="entry name" value="RibA"/>
    <property type="match status" value="1"/>
</dbReference>
<dbReference type="InterPro" id="IPR032677">
    <property type="entry name" value="GTP_cyclohydro_II"/>
</dbReference>
<dbReference type="InterPro" id="IPR000926">
    <property type="entry name" value="RibA"/>
</dbReference>
<dbReference type="InterPro" id="IPR036144">
    <property type="entry name" value="RibA-like_sf"/>
</dbReference>
<dbReference type="NCBIfam" id="NF001591">
    <property type="entry name" value="PRK00393.1"/>
    <property type="match status" value="1"/>
</dbReference>
<dbReference type="NCBIfam" id="TIGR00505">
    <property type="entry name" value="ribA"/>
    <property type="match status" value="1"/>
</dbReference>
<dbReference type="PANTHER" id="PTHR21327:SF18">
    <property type="entry name" value="3,4-DIHYDROXY-2-BUTANONE 4-PHOSPHATE SYNTHASE"/>
    <property type="match status" value="1"/>
</dbReference>
<dbReference type="PANTHER" id="PTHR21327">
    <property type="entry name" value="GTP CYCLOHYDROLASE II-RELATED"/>
    <property type="match status" value="1"/>
</dbReference>
<dbReference type="Pfam" id="PF00925">
    <property type="entry name" value="GTP_cyclohydro2"/>
    <property type="match status" value="1"/>
</dbReference>
<dbReference type="SUPFAM" id="SSF142695">
    <property type="entry name" value="RibA-like"/>
    <property type="match status" value="1"/>
</dbReference>
<comment type="function">
    <text evidence="1">Catalyzes the conversion of GTP to 2,5-diamino-6-ribosylamino-4(3H)-pyrimidinone 5'-phosphate (DARP), formate and pyrophosphate.</text>
</comment>
<comment type="catalytic activity">
    <reaction evidence="1">
        <text>GTP + 4 H2O = 2,5-diamino-6-hydroxy-4-(5-phosphoribosylamino)-pyrimidine + formate + 2 phosphate + 3 H(+)</text>
        <dbReference type="Rhea" id="RHEA:23704"/>
        <dbReference type="ChEBI" id="CHEBI:15377"/>
        <dbReference type="ChEBI" id="CHEBI:15378"/>
        <dbReference type="ChEBI" id="CHEBI:15740"/>
        <dbReference type="ChEBI" id="CHEBI:37565"/>
        <dbReference type="ChEBI" id="CHEBI:43474"/>
        <dbReference type="ChEBI" id="CHEBI:58614"/>
        <dbReference type="EC" id="3.5.4.25"/>
    </reaction>
</comment>
<comment type="cofactor">
    <cofactor evidence="1">
        <name>Zn(2+)</name>
        <dbReference type="ChEBI" id="CHEBI:29105"/>
    </cofactor>
    <text evidence="1">Binds 1 zinc ion per subunit.</text>
</comment>
<comment type="pathway">
    <text evidence="1">Cofactor biosynthesis; riboflavin biosynthesis; 5-amino-6-(D-ribitylamino)uracil from GTP: step 1/4.</text>
</comment>
<comment type="similarity">
    <text evidence="1">Belongs to the GTP cyclohydrolase II family.</text>
</comment>
<keyword id="KW-0342">GTP-binding</keyword>
<keyword id="KW-0378">Hydrolase</keyword>
<keyword id="KW-0479">Metal-binding</keyword>
<keyword id="KW-0547">Nucleotide-binding</keyword>
<keyword id="KW-1185">Reference proteome</keyword>
<keyword id="KW-0686">Riboflavin biosynthesis</keyword>
<keyword id="KW-0862">Zinc</keyword>
<organism>
    <name type="scientific">Streptomyces coelicolor (strain ATCC BAA-471 / A3(2) / M145)</name>
    <dbReference type="NCBI Taxonomy" id="100226"/>
    <lineage>
        <taxon>Bacteria</taxon>
        <taxon>Bacillati</taxon>
        <taxon>Actinomycetota</taxon>
        <taxon>Actinomycetes</taxon>
        <taxon>Kitasatosporales</taxon>
        <taxon>Streptomycetaceae</taxon>
        <taxon>Streptomyces</taxon>
        <taxon>Streptomyces albidoflavus group</taxon>
    </lineage>
</organism>
<accession>O88011</accession>
<reference key="1">
    <citation type="journal article" date="2002" name="Nature">
        <title>Complete genome sequence of the model actinomycete Streptomyces coelicolor A3(2).</title>
        <authorList>
            <person name="Bentley S.D."/>
            <person name="Chater K.F."/>
            <person name="Cerdeno-Tarraga A.-M."/>
            <person name="Challis G.L."/>
            <person name="Thomson N.R."/>
            <person name="James K.D."/>
            <person name="Harris D.E."/>
            <person name="Quail M.A."/>
            <person name="Kieser H."/>
            <person name="Harper D."/>
            <person name="Bateman A."/>
            <person name="Brown S."/>
            <person name="Chandra G."/>
            <person name="Chen C.W."/>
            <person name="Collins M."/>
            <person name="Cronin A."/>
            <person name="Fraser A."/>
            <person name="Goble A."/>
            <person name="Hidalgo J."/>
            <person name="Hornsby T."/>
            <person name="Howarth S."/>
            <person name="Huang C.-H."/>
            <person name="Kieser T."/>
            <person name="Larke L."/>
            <person name="Murphy L.D."/>
            <person name="Oliver K."/>
            <person name="O'Neil S."/>
            <person name="Rabbinowitsch E."/>
            <person name="Rajandream M.A."/>
            <person name="Rutherford K.M."/>
            <person name="Rutter S."/>
            <person name="Seeger K."/>
            <person name="Saunders D."/>
            <person name="Sharp S."/>
            <person name="Squares R."/>
            <person name="Squares S."/>
            <person name="Taylor K."/>
            <person name="Warren T."/>
            <person name="Wietzorrek A."/>
            <person name="Woodward J.R."/>
            <person name="Barrell B.G."/>
            <person name="Parkhill J."/>
            <person name="Hopwood D.A."/>
        </authorList>
    </citation>
    <scope>NUCLEOTIDE SEQUENCE [LARGE SCALE GENOMIC DNA]</scope>
    <source>
        <strain>ATCC BAA-471 / A3(2) / M145</strain>
    </source>
</reference>
<evidence type="ECO:0000255" key="1">
    <source>
        <dbReference type="HAMAP-Rule" id="MF_00179"/>
    </source>
</evidence>
<proteinExistence type="inferred from homology"/>
<gene>
    <name evidence="1" type="primary">ribA</name>
    <name type="ordered locus">SCO6655</name>
    <name type="ORF">SC5A7.05</name>
</gene>
<feature type="chain" id="PRO_0000151777" description="GTP cyclohydrolase-2">
    <location>
        <begin position="1"/>
        <end position="221"/>
    </location>
</feature>
<feature type="active site" description="Proton acceptor" evidence="1">
    <location>
        <position position="141"/>
    </location>
</feature>
<feature type="active site" description="Nucleophile" evidence="1">
    <location>
        <position position="143"/>
    </location>
</feature>
<feature type="binding site" evidence="1">
    <location>
        <begin position="63"/>
        <end position="67"/>
    </location>
    <ligand>
        <name>GTP</name>
        <dbReference type="ChEBI" id="CHEBI:37565"/>
    </ligand>
</feature>
<feature type="binding site" evidence="1">
    <location>
        <position position="68"/>
    </location>
    <ligand>
        <name>Zn(2+)</name>
        <dbReference type="ChEBI" id="CHEBI:29105"/>
        <note>catalytic</note>
    </ligand>
</feature>
<feature type="binding site" evidence="1">
    <location>
        <position position="79"/>
    </location>
    <ligand>
        <name>Zn(2+)</name>
        <dbReference type="ChEBI" id="CHEBI:29105"/>
        <note>catalytic</note>
    </ligand>
</feature>
<feature type="binding site" evidence="1">
    <location>
        <position position="81"/>
    </location>
    <ligand>
        <name>Zn(2+)</name>
        <dbReference type="ChEBI" id="CHEBI:29105"/>
        <note>catalytic</note>
    </ligand>
</feature>
<feature type="binding site" evidence="1">
    <location>
        <position position="84"/>
    </location>
    <ligand>
        <name>GTP</name>
        <dbReference type="ChEBI" id="CHEBI:37565"/>
    </ligand>
</feature>
<feature type="binding site" evidence="1">
    <location>
        <begin position="107"/>
        <end position="109"/>
    </location>
    <ligand>
        <name>GTP</name>
        <dbReference type="ChEBI" id="CHEBI:37565"/>
    </ligand>
</feature>
<feature type="binding site" evidence="1">
    <location>
        <position position="129"/>
    </location>
    <ligand>
        <name>GTP</name>
        <dbReference type="ChEBI" id="CHEBI:37565"/>
    </ligand>
</feature>
<feature type="binding site" evidence="1">
    <location>
        <position position="164"/>
    </location>
    <ligand>
        <name>GTP</name>
        <dbReference type="ChEBI" id="CHEBI:37565"/>
    </ligand>
</feature>
<feature type="binding site" evidence="1">
    <location>
        <position position="169"/>
    </location>
    <ligand>
        <name>GTP</name>
        <dbReference type="ChEBI" id="CHEBI:37565"/>
    </ligand>
</feature>
<sequence>MTEKIGVLGKKTTQRTDVERIVVTPLPTVYGKFRAFGYFDHERGDEQVALVHGDLGAEDVLTRLHSECLTGDAFGSQHCECGAQLASALRQVADAGSGIVVYLRGHEGRGIGLLAKLRAMALQAEGLDTVEANLALGLPVDARDYGVAARILDDLGVRSVRLMSNNPRKREALVRHGIRVAEQVPLLIPPCESNITYLRTKRERLDHHLPHLDAAMAHVSS</sequence>